<keyword id="KW-0378">Hydrolase</keyword>
<keyword id="KW-1185">Reference proteome</keyword>
<sequence length="257" mass="29159">MKLIEKTMSMNQFRTMEEEKQDGGELFHTIEVAKVDRNNVSQPPPAATAALLEVPGDELNLIPPLNFSMVDNGIFRSGFPDSANFSFIKTLGLRSIISLCPEPYPENNMQFLKSNGISLFQFGIEGSKSKCLPGLENEVWLHIWSSKHQKEDFYTNGNSKTSEPFVDILDQKIREALKVLLDEKNHPLLIHCKRGKHRTGCLVGCMRKLQKWCITSILDEYKRFAAAKARVSDQRFLESFDVSGLKHTPMSFSCSNR</sequence>
<feature type="chain" id="PRO_0000442992" description="Inositol diphosphatase DSP2">
    <location>
        <begin position="1"/>
        <end position="257"/>
    </location>
</feature>
<feature type="domain" description="Tyrosine-protein phosphatase" evidence="3">
    <location>
        <begin position="66"/>
        <end position="251"/>
    </location>
</feature>
<feature type="active site" description="Phosphocysteine intermediate" evidence="3">
    <location>
        <position position="192"/>
    </location>
</feature>
<feature type="binding site" evidence="2">
    <location>
        <position position="168"/>
    </location>
    <ligand>
        <name>1D-myo-inositol hexakisphosphate</name>
        <dbReference type="ChEBI" id="CHEBI:58130"/>
    </ligand>
</feature>
<feature type="binding site" evidence="2">
    <location>
        <position position="172"/>
    </location>
    <ligand>
        <name>1D-myo-inositol hexakisphosphate</name>
        <dbReference type="ChEBI" id="CHEBI:58130"/>
    </ligand>
</feature>
<feature type="site" description="Transition state stabilizer" evidence="1">
    <location>
        <position position="198"/>
    </location>
</feature>
<comment type="function">
    <text evidence="4 5 6">Cleaves the beta-phosphate at the 5-position of soluble inositol pyrophosphates (PubMed:35640071). Has highest activity on 5-diphosphoinositol 1,2,3,4,6-pentakisphosphate (5-InsP(7)), 1,5-bis-diphosphoinositol 2,3,4,6-tetrakisphosphate (1,5-InsP(8)) and 3,5-InsP(8) (PubMed:35640071). Possesses phosphotyrosine phosphatase activity in vitro (PubMed:21409566). Dephosphorylates the phosphoinositides PI(3,5)P2 (PubMed:21409566). Hydrolyzes para-nitrophenyl phosphate and O-methylfluorescein phosphate in vitro (PubMed:17976645, PubMed:21409566).</text>
</comment>
<comment type="catalytic activity">
    <reaction evidence="6">
        <text>5-diphospho-1D-myo-inositol 1,2,3,4,6-pentakisphosphate + H2O = 1D-myo-inositol hexakisphosphate + phosphate + H(+)</text>
        <dbReference type="Rhea" id="RHEA:22384"/>
        <dbReference type="ChEBI" id="CHEBI:15377"/>
        <dbReference type="ChEBI" id="CHEBI:15378"/>
        <dbReference type="ChEBI" id="CHEBI:43474"/>
        <dbReference type="ChEBI" id="CHEBI:58130"/>
        <dbReference type="ChEBI" id="CHEBI:58628"/>
        <dbReference type="EC" id="3.6.1.52"/>
    </reaction>
    <physiologicalReaction direction="left-to-right" evidence="6">
        <dbReference type="Rhea" id="RHEA:22385"/>
    </physiologicalReaction>
</comment>
<comment type="catalytic activity">
    <reaction evidence="6">
        <text>1,5-bis(diphospho)-1D-myo-inositol 2,3,4,6-tetrakisphosphate + H2O = 1-diphospho-1D-myo-inositol 2,3,4,5,6-pentakisphosphate + phosphate + 2 H(+)</text>
        <dbReference type="Rhea" id="RHEA:79699"/>
        <dbReference type="ChEBI" id="CHEBI:15377"/>
        <dbReference type="ChEBI" id="CHEBI:15378"/>
        <dbReference type="ChEBI" id="CHEBI:43474"/>
        <dbReference type="ChEBI" id="CHEBI:74946"/>
        <dbReference type="ChEBI" id="CHEBI:77983"/>
        <dbReference type="EC" id="3.6.1.52"/>
    </reaction>
    <physiologicalReaction direction="left-to-right" evidence="6">
        <dbReference type="Rhea" id="RHEA:79700"/>
    </physiologicalReaction>
</comment>
<comment type="catalytic activity">
    <reaction evidence="6">
        <text>3,5-bis(diphospho)-1D-myo-inositol 1,2,4,6-tetrakisphosphate + H2O = 3-diphospho-1D-myo-inositol 1,2,4,5,6-pentakisphosphate + phosphate + 2 H(+)</text>
        <dbReference type="Rhea" id="RHEA:56312"/>
        <dbReference type="ChEBI" id="CHEBI:15377"/>
        <dbReference type="ChEBI" id="CHEBI:15378"/>
        <dbReference type="ChEBI" id="CHEBI:43474"/>
        <dbReference type="ChEBI" id="CHEBI:140372"/>
        <dbReference type="ChEBI" id="CHEBI:140374"/>
        <dbReference type="EC" id="3.6.1.52"/>
    </reaction>
    <physiologicalReaction direction="left-to-right" evidence="6">
        <dbReference type="Rhea" id="RHEA:56313"/>
    </physiologicalReaction>
</comment>
<comment type="catalytic activity">
    <reaction evidence="6">
        <text>6-diphospho-1D-myo-inositol pentakisphosphate + H2O = 1D-myo-inositol hexakisphosphate + phosphate + H(+)</text>
        <dbReference type="Rhea" id="RHEA:79703"/>
        <dbReference type="ChEBI" id="CHEBI:15377"/>
        <dbReference type="ChEBI" id="CHEBI:15378"/>
        <dbReference type="ChEBI" id="CHEBI:43474"/>
        <dbReference type="ChEBI" id="CHEBI:58130"/>
        <dbReference type="ChEBI" id="CHEBI:230534"/>
        <dbReference type="EC" id="3.6.1.52"/>
    </reaction>
    <physiologicalReaction direction="left-to-right" evidence="6">
        <dbReference type="Rhea" id="RHEA:79704"/>
    </physiologicalReaction>
</comment>
<comment type="interaction">
    <interactant intactId="EBI-4424266">
        <id>Q84MD6</id>
    </interactant>
    <interactant intactId="EBI-4426649">
        <id>Q17TI5</id>
        <label>BRX</label>
    </interactant>
    <organismsDiffer>false</organismsDiffer>
    <experiments>6</experiments>
</comment>
<comment type="interaction">
    <interactant intactId="EBI-4424266">
        <id>Q84MD6</id>
    </interactant>
    <interactant intactId="EBI-4424266">
        <id>Q84MD6</id>
        <label>DSP2</label>
    </interactant>
    <organismsDiffer>false</organismsDiffer>
    <experiments>3</experiments>
</comment>
<comment type="tissue specificity">
    <text evidence="5">Expressed in roots, leaves, stems, flowers and siliques.</text>
</comment>
<comment type="similarity">
    <text evidence="8">Belongs to the protein-tyrosine phosphatase family. Atypical dual-specificity phosphatase Siw14-like subfamily.</text>
</comment>
<comment type="caution">
    <text evidence="8">Was initially described as a protein tyrosine phosphatase and has phosphotyrosine phosphatase activity in vitro but is now thought to function as an inositol pyrophosphate phosphatase.</text>
</comment>
<comment type="sequence caution" evidence="8">
    <conflict type="erroneous gene model prediction">
        <sequence resource="EMBL-CDS" id="AAB91974"/>
    </conflict>
</comment>
<protein>
    <recommendedName>
        <fullName evidence="8">Inositol diphosphatase DSP2</fullName>
        <ecNumber evidence="6">3.6.1.52</ecNumber>
    </recommendedName>
    <alternativeName>
        <fullName evidence="8">Inositol pyrophosphate phosphatase DSP2</fullName>
    </alternativeName>
    <alternativeName>
        <fullName evidence="7">Protein PLANT AND FUNGI ATYPICAL DUAL-SPECIFICITY PHOSPHATASE 2</fullName>
        <shortName evidence="7">AtPFA-DSP2</shortName>
    </alternativeName>
</protein>
<proteinExistence type="evidence at protein level"/>
<dbReference type="EC" id="3.6.1.52" evidence="6"/>
<dbReference type="EMBL" id="AC003033">
    <property type="protein sequence ID" value="AAB91974.1"/>
    <property type="status" value="ALT_SEQ"/>
    <property type="molecule type" value="Genomic_DNA"/>
</dbReference>
<dbReference type="EMBL" id="CP002685">
    <property type="protein sequence ID" value="AEC08767.1"/>
    <property type="molecule type" value="Genomic_DNA"/>
</dbReference>
<dbReference type="EMBL" id="BT006379">
    <property type="protein sequence ID" value="AAP21187.1"/>
    <property type="molecule type" value="mRNA"/>
</dbReference>
<dbReference type="EMBL" id="AK227524">
    <property type="protein sequence ID" value="BAE99524.1"/>
    <property type="molecule type" value="mRNA"/>
</dbReference>
<dbReference type="PIR" id="T01111">
    <property type="entry name" value="T01111"/>
</dbReference>
<dbReference type="SMR" id="Q84MD6"/>
<dbReference type="FunCoup" id="Q84MD6">
    <property type="interactions" value="37"/>
</dbReference>
<dbReference type="IntAct" id="Q84MD6">
    <property type="interactions" value="2"/>
</dbReference>
<dbReference type="STRING" id="3702.Q84MD6"/>
<dbReference type="PaxDb" id="3702-AT2G32960.1"/>
<dbReference type="ProteomicsDB" id="221912"/>
<dbReference type="EnsemblPlants" id="AT2G32960.1">
    <property type="protein sequence ID" value="AT2G32960.1"/>
    <property type="gene ID" value="AT2G32960"/>
</dbReference>
<dbReference type="Gramene" id="AT2G32960.1">
    <property type="protein sequence ID" value="AT2G32960.1"/>
    <property type="gene ID" value="AT2G32960"/>
</dbReference>
<dbReference type="KEGG" id="ath:AT2G32960"/>
<dbReference type="Araport" id="AT2G32960"/>
<dbReference type="TAIR" id="AT2G32960">
    <property type="gene designation" value="PFA-DSP2"/>
</dbReference>
<dbReference type="eggNOG" id="KOG1572">
    <property type="taxonomic scope" value="Eukaryota"/>
</dbReference>
<dbReference type="HOGENOM" id="CLU_047845_5_0_1"/>
<dbReference type="InParanoid" id="Q84MD6"/>
<dbReference type="OMA" id="FHTIEVA"/>
<dbReference type="PhylomeDB" id="Q84MD6"/>
<dbReference type="PRO" id="PR:Q84MD6"/>
<dbReference type="Proteomes" id="UP000006548">
    <property type="component" value="Chromosome 2"/>
</dbReference>
<dbReference type="ExpressionAtlas" id="Q84MD6">
    <property type="expression patterns" value="baseline and differential"/>
</dbReference>
<dbReference type="GO" id="GO:0042802">
    <property type="term" value="F:identical protein binding"/>
    <property type="evidence" value="ECO:0000353"/>
    <property type="project" value="IntAct"/>
</dbReference>
<dbReference type="GO" id="GO:0052847">
    <property type="term" value="F:inositol-1,5-bisdiphosphate-2,3,4,6-tetrakisphosphate 5-diphosphatase activity"/>
    <property type="evidence" value="ECO:0000314"/>
    <property type="project" value="UniProtKB"/>
</dbReference>
<dbReference type="GO" id="GO:0052848">
    <property type="term" value="F:inositol-3,5-bisdiphosphate-2,3,4,6-tetrakisphosphate 5-diphosphatase activity"/>
    <property type="evidence" value="ECO:0007669"/>
    <property type="project" value="RHEA"/>
</dbReference>
<dbReference type="GO" id="GO:0052845">
    <property type="term" value="F:inositol-5-diphosphate-1,2,3,4,6-pentakisphosphate diphosphatase activity"/>
    <property type="evidence" value="ECO:0000314"/>
    <property type="project" value="UniProtKB"/>
</dbReference>
<dbReference type="GO" id="GO:0016791">
    <property type="term" value="F:phosphatase activity"/>
    <property type="evidence" value="ECO:0000314"/>
    <property type="project" value="TAIR"/>
</dbReference>
<dbReference type="GO" id="GO:0004725">
    <property type="term" value="F:protein tyrosine phosphatase activity"/>
    <property type="evidence" value="ECO:0007669"/>
    <property type="project" value="UniProtKB-EC"/>
</dbReference>
<dbReference type="CDD" id="cd14528">
    <property type="entry name" value="PFA-DSP_Siw14"/>
    <property type="match status" value="1"/>
</dbReference>
<dbReference type="Gene3D" id="3.90.190.10">
    <property type="entry name" value="Protein tyrosine phosphatase superfamily"/>
    <property type="match status" value="1"/>
</dbReference>
<dbReference type="InterPro" id="IPR020428">
    <property type="entry name" value="PFA-DSPs"/>
</dbReference>
<dbReference type="InterPro" id="IPR029021">
    <property type="entry name" value="Prot-tyrosine_phosphatase-like"/>
</dbReference>
<dbReference type="InterPro" id="IPR004861">
    <property type="entry name" value="Siw14-like"/>
</dbReference>
<dbReference type="InterPro" id="IPR016130">
    <property type="entry name" value="Tyr_Pase_AS"/>
</dbReference>
<dbReference type="InterPro" id="IPR000387">
    <property type="entry name" value="Tyr_Pase_dom"/>
</dbReference>
<dbReference type="InterPro" id="IPR020422">
    <property type="entry name" value="TYR_PHOSPHATASE_DUAL_dom"/>
</dbReference>
<dbReference type="PANTHER" id="PTHR31126">
    <property type="entry name" value="TYROSINE-PROTEIN PHOSPHATASE"/>
    <property type="match status" value="1"/>
</dbReference>
<dbReference type="PANTHER" id="PTHR31126:SF63">
    <property type="entry name" value="TYROSINE-PROTEIN PHOSPHATASE DSP2"/>
    <property type="match status" value="1"/>
</dbReference>
<dbReference type="Pfam" id="PF03162">
    <property type="entry name" value="Y_phosphatase2"/>
    <property type="match status" value="1"/>
</dbReference>
<dbReference type="PRINTS" id="PR01911">
    <property type="entry name" value="PFDSPHPHTASE"/>
</dbReference>
<dbReference type="SUPFAM" id="SSF52799">
    <property type="entry name" value="(Phosphotyrosine protein) phosphatases II"/>
    <property type="match status" value="1"/>
</dbReference>
<dbReference type="PROSITE" id="PS00383">
    <property type="entry name" value="TYR_PHOSPHATASE_1"/>
    <property type="match status" value="1"/>
</dbReference>
<dbReference type="PROSITE" id="PS50056">
    <property type="entry name" value="TYR_PHOSPHATASE_2"/>
    <property type="match status" value="1"/>
</dbReference>
<dbReference type="PROSITE" id="PS50054">
    <property type="entry name" value="TYR_PHOSPHATASE_DUAL"/>
    <property type="match status" value="1"/>
</dbReference>
<gene>
    <name evidence="8" type="primary">DSP2</name>
    <name evidence="9" type="ordered locus">At2g32960</name>
</gene>
<accession>Q84MD6</accession>
<accession>O48769</accession>
<organism>
    <name type="scientific">Arabidopsis thaliana</name>
    <name type="common">Mouse-ear cress</name>
    <dbReference type="NCBI Taxonomy" id="3702"/>
    <lineage>
        <taxon>Eukaryota</taxon>
        <taxon>Viridiplantae</taxon>
        <taxon>Streptophyta</taxon>
        <taxon>Embryophyta</taxon>
        <taxon>Tracheophyta</taxon>
        <taxon>Spermatophyta</taxon>
        <taxon>Magnoliopsida</taxon>
        <taxon>eudicotyledons</taxon>
        <taxon>Gunneridae</taxon>
        <taxon>Pentapetalae</taxon>
        <taxon>rosids</taxon>
        <taxon>malvids</taxon>
        <taxon>Brassicales</taxon>
        <taxon>Brassicaceae</taxon>
        <taxon>Camelineae</taxon>
        <taxon>Arabidopsis</taxon>
    </lineage>
</organism>
<name>DSP2_ARATH</name>
<evidence type="ECO:0000250" key="1">
    <source>
        <dbReference type="UniProtKB" id="P53965"/>
    </source>
</evidence>
<evidence type="ECO:0000250" key="2">
    <source>
        <dbReference type="UniProtKB" id="Q9ZVN4"/>
    </source>
</evidence>
<evidence type="ECO:0000255" key="3">
    <source>
        <dbReference type="PROSITE-ProRule" id="PRU00160"/>
    </source>
</evidence>
<evidence type="ECO:0000269" key="4">
    <source>
    </source>
</evidence>
<evidence type="ECO:0000269" key="5">
    <source>
    </source>
</evidence>
<evidence type="ECO:0000269" key="6">
    <source>
    </source>
</evidence>
<evidence type="ECO:0000303" key="7">
    <source>
    </source>
</evidence>
<evidence type="ECO:0000305" key="8"/>
<evidence type="ECO:0000312" key="9">
    <source>
        <dbReference type="Araport" id="AT2G32960"/>
    </source>
</evidence>
<reference key="1">
    <citation type="journal article" date="1999" name="Nature">
        <title>Sequence and analysis of chromosome 2 of the plant Arabidopsis thaliana.</title>
        <authorList>
            <person name="Lin X."/>
            <person name="Kaul S."/>
            <person name="Rounsley S.D."/>
            <person name="Shea T.P."/>
            <person name="Benito M.-I."/>
            <person name="Town C.D."/>
            <person name="Fujii C.Y."/>
            <person name="Mason T.M."/>
            <person name="Bowman C.L."/>
            <person name="Barnstead M.E."/>
            <person name="Feldblyum T.V."/>
            <person name="Buell C.R."/>
            <person name="Ketchum K.A."/>
            <person name="Lee J.J."/>
            <person name="Ronning C.M."/>
            <person name="Koo H.L."/>
            <person name="Moffat K.S."/>
            <person name="Cronin L.A."/>
            <person name="Shen M."/>
            <person name="Pai G."/>
            <person name="Van Aken S."/>
            <person name="Umayam L."/>
            <person name="Tallon L.J."/>
            <person name="Gill J.E."/>
            <person name="Adams M.D."/>
            <person name="Carrera A.J."/>
            <person name="Creasy T.H."/>
            <person name="Goodman H.M."/>
            <person name="Somerville C.R."/>
            <person name="Copenhaver G.P."/>
            <person name="Preuss D."/>
            <person name="Nierman W.C."/>
            <person name="White O."/>
            <person name="Eisen J.A."/>
            <person name="Salzberg S.L."/>
            <person name="Fraser C.M."/>
            <person name="Venter J.C."/>
        </authorList>
    </citation>
    <scope>NUCLEOTIDE SEQUENCE [LARGE SCALE GENOMIC DNA]</scope>
    <source>
        <strain>cv. Columbia</strain>
    </source>
</reference>
<reference key="2">
    <citation type="journal article" date="2017" name="Plant J.">
        <title>Araport11: a complete reannotation of the Arabidopsis thaliana reference genome.</title>
        <authorList>
            <person name="Cheng C.Y."/>
            <person name="Krishnakumar V."/>
            <person name="Chan A.P."/>
            <person name="Thibaud-Nissen F."/>
            <person name="Schobel S."/>
            <person name="Town C.D."/>
        </authorList>
    </citation>
    <scope>GENOME REANNOTATION</scope>
    <source>
        <strain>cv. Columbia</strain>
    </source>
</reference>
<reference key="3">
    <citation type="journal article" date="2003" name="Science">
        <title>Empirical analysis of transcriptional activity in the Arabidopsis genome.</title>
        <authorList>
            <person name="Yamada K."/>
            <person name="Lim J."/>
            <person name="Dale J.M."/>
            <person name="Chen H."/>
            <person name="Shinn P."/>
            <person name="Palm C.J."/>
            <person name="Southwick A.M."/>
            <person name="Wu H.C."/>
            <person name="Kim C.J."/>
            <person name="Nguyen M."/>
            <person name="Pham P.K."/>
            <person name="Cheuk R.F."/>
            <person name="Karlin-Newmann G."/>
            <person name="Liu S.X."/>
            <person name="Lam B."/>
            <person name="Sakano H."/>
            <person name="Wu T."/>
            <person name="Yu G."/>
            <person name="Miranda M."/>
            <person name="Quach H.L."/>
            <person name="Tripp M."/>
            <person name="Chang C.H."/>
            <person name="Lee J.M."/>
            <person name="Toriumi M.J."/>
            <person name="Chan M.M."/>
            <person name="Tang C.C."/>
            <person name="Onodera C.S."/>
            <person name="Deng J.M."/>
            <person name="Akiyama K."/>
            <person name="Ansari Y."/>
            <person name="Arakawa T."/>
            <person name="Banh J."/>
            <person name="Banno F."/>
            <person name="Bowser L."/>
            <person name="Brooks S.Y."/>
            <person name="Carninci P."/>
            <person name="Chao Q."/>
            <person name="Choy N."/>
            <person name="Enju A."/>
            <person name="Goldsmith A.D."/>
            <person name="Gurjal M."/>
            <person name="Hansen N.F."/>
            <person name="Hayashizaki Y."/>
            <person name="Johnson-Hopson C."/>
            <person name="Hsuan V.W."/>
            <person name="Iida K."/>
            <person name="Karnes M."/>
            <person name="Khan S."/>
            <person name="Koesema E."/>
            <person name="Ishida J."/>
            <person name="Jiang P.X."/>
            <person name="Jones T."/>
            <person name="Kawai J."/>
            <person name="Kamiya A."/>
            <person name="Meyers C."/>
            <person name="Nakajima M."/>
            <person name="Narusaka M."/>
            <person name="Seki M."/>
            <person name="Sakurai T."/>
            <person name="Satou M."/>
            <person name="Tamse R."/>
            <person name="Vaysberg M."/>
            <person name="Wallender E.K."/>
            <person name="Wong C."/>
            <person name="Yamamura Y."/>
            <person name="Yuan S."/>
            <person name="Shinozaki K."/>
            <person name="Davis R.W."/>
            <person name="Theologis A."/>
            <person name="Ecker J.R."/>
        </authorList>
    </citation>
    <scope>NUCLEOTIDE SEQUENCE [LARGE SCALE MRNA]</scope>
    <source>
        <strain>cv. Columbia</strain>
    </source>
</reference>
<reference key="4">
    <citation type="submission" date="2006-07" db="EMBL/GenBank/DDBJ databases">
        <title>Large-scale analysis of RIKEN Arabidopsis full-length (RAFL) cDNAs.</title>
        <authorList>
            <person name="Totoki Y."/>
            <person name="Seki M."/>
            <person name="Ishida J."/>
            <person name="Nakajima M."/>
            <person name="Enju A."/>
            <person name="Kamiya A."/>
            <person name="Narusaka M."/>
            <person name="Shin-i T."/>
            <person name="Nakagawa M."/>
            <person name="Sakamoto N."/>
            <person name="Oishi K."/>
            <person name="Kohara Y."/>
            <person name="Kobayashi M."/>
            <person name="Toyoda A."/>
            <person name="Sakaki Y."/>
            <person name="Sakurai T."/>
            <person name="Iida K."/>
            <person name="Akiyama K."/>
            <person name="Satou M."/>
            <person name="Toyoda T."/>
            <person name="Konagaya A."/>
            <person name="Carninci P."/>
            <person name="Kawai J."/>
            <person name="Hayashizaki Y."/>
            <person name="Shinozaki K."/>
        </authorList>
    </citation>
    <scope>NUCLEOTIDE SEQUENCE [LARGE SCALE MRNA]</scope>
    <source>
        <strain>cv. Columbia</strain>
    </source>
</reference>
<reference key="5">
    <citation type="journal article" date="2007" name="J. Mol. Biol.">
        <title>A novel phosphatase family, structurally related to dual-specificity phosphatases, that displays unique amino acid sequence and substrate specificity.</title>
        <authorList>
            <person name="Roma-Mateo C."/>
            <person name="Rios P."/>
            <person name="Tabernero L."/>
            <person name="Attwood T.K."/>
            <person name="Pulido R."/>
        </authorList>
    </citation>
    <scope>FUNCTION</scope>
</reference>
<reference key="6">
    <citation type="journal article" date="2011" name="Mol. Genet. Genomics">
        <title>Phylogenetic and genetic linkage between novel atypical dual-specificity phosphatases from non-metazoan organisms.</title>
        <authorList>
            <person name="Roma-Mateo C."/>
            <person name="Sacristan-Reviriego A."/>
            <person name="Beresford N.J."/>
            <person name="Caparros-Martin J.A."/>
            <person name="Culianez-Macia F.A."/>
            <person name="Martin H."/>
            <person name="Molina M."/>
            <person name="Tabernero L."/>
            <person name="Pulido R."/>
        </authorList>
    </citation>
    <scope>FUNCTION</scope>
    <scope>TISSUE SPECIFICITY</scope>
</reference>
<reference key="7">
    <citation type="journal article" date="2022" name="Biochemistry">
        <title>Arabidopsis PFA-DSP-Type Phosphohydrolases Target Specific Inositol Pyrophosphate Messengers.</title>
        <authorList>
            <person name="Gaugler P."/>
            <person name="Schneider R."/>
            <person name="Liu G."/>
            <person name="Qiu D."/>
            <person name="Weber J."/>
            <person name="Schmid J."/>
            <person name="Jork N."/>
            <person name="Haener M."/>
            <person name="Ritter K."/>
            <person name="Fernandez-Rebollo N."/>
            <person name="Giehl R.F.H."/>
            <person name="Trung M.N."/>
            <person name="Yadav R."/>
            <person name="Fiedler D."/>
            <person name="Gaugler V."/>
            <person name="Jessen H.J."/>
            <person name="Schaaf G."/>
            <person name="Laha D."/>
        </authorList>
    </citation>
    <scope>FUNCTION</scope>
    <scope>CATALYTIC ACTIVITY</scope>
</reference>